<keyword id="KW-0963">Cytoplasm</keyword>
<keyword id="KW-0328">Glycosyltransferase</keyword>
<keyword id="KW-0660">Purine salvage</keyword>
<keyword id="KW-0808">Transferase</keyword>
<sequence length="170" mass="19298">MELKDYIRNIQDYPKKGILFRDITTLLQNKDAFKYAIDKMAEQISSEKIDYIVGAESRGFLIGSALAYKLNCGFIPVRKKGKLPYKTISEEYALEYGTDTLYMHEDAIKKGERVLIVDDLIATGGTALAMIKMVEKLEGIVVGSSFLIELKELNGRKEIEKYPVNVLIEY</sequence>
<organism>
    <name type="scientific">Brachyspira hyodysenteriae (strain ATCC 49526 / WA1)</name>
    <dbReference type="NCBI Taxonomy" id="565034"/>
    <lineage>
        <taxon>Bacteria</taxon>
        <taxon>Pseudomonadati</taxon>
        <taxon>Spirochaetota</taxon>
        <taxon>Spirochaetia</taxon>
        <taxon>Brachyspirales</taxon>
        <taxon>Brachyspiraceae</taxon>
        <taxon>Brachyspira</taxon>
    </lineage>
</organism>
<gene>
    <name evidence="1" type="primary">apt</name>
    <name type="ordered locus">BHWA1_02056</name>
</gene>
<proteinExistence type="inferred from homology"/>
<reference key="1">
    <citation type="journal article" date="2009" name="PLoS ONE">
        <title>Genome sequence of the pathogenic intestinal spirochete Brachyspira hyodysenteriae reveals adaptations to its lifestyle in the porcine large intestine.</title>
        <authorList>
            <person name="Bellgard M.I."/>
            <person name="Wanchanthuek P."/>
            <person name="La T."/>
            <person name="Ryan K."/>
            <person name="Moolhuijzen P."/>
            <person name="Albertyn Z."/>
            <person name="Shaban B."/>
            <person name="Motro Y."/>
            <person name="Dunn D.S."/>
            <person name="Schibeci D."/>
            <person name="Hunter A."/>
            <person name="Barrero R."/>
            <person name="Phillips N.D."/>
            <person name="Hampson D.J."/>
        </authorList>
    </citation>
    <scope>NUCLEOTIDE SEQUENCE [LARGE SCALE GENOMIC DNA]</scope>
    <source>
        <strain>ATCC 49526 / WA1</strain>
    </source>
</reference>
<dbReference type="EC" id="2.4.2.7" evidence="1"/>
<dbReference type="EMBL" id="CP001357">
    <property type="protein sequence ID" value="ACN84515.1"/>
    <property type="molecule type" value="Genomic_DNA"/>
</dbReference>
<dbReference type="RefSeq" id="WP_012671553.1">
    <property type="nucleotide sequence ID" value="NC_012225.1"/>
</dbReference>
<dbReference type="SMR" id="C0QVL4"/>
<dbReference type="STRING" id="565034.BHWA1_02056"/>
<dbReference type="GeneID" id="63963209"/>
<dbReference type="KEGG" id="bhy:BHWA1_02056"/>
<dbReference type="eggNOG" id="COG0503">
    <property type="taxonomic scope" value="Bacteria"/>
</dbReference>
<dbReference type="HOGENOM" id="CLU_063339_3_0_12"/>
<dbReference type="UniPathway" id="UPA00588">
    <property type="reaction ID" value="UER00646"/>
</dbReference>
<dbReference type="Proteomes" id="UP000001803">
    <property type="component" value="Chromosome"/>
</dbReference>
<dbReference type="GO" id="GO:0005737">
    <property type="term" value="C:cytoplasm"/>
    <property type="evidence" value="ECO:0007669"/>
    <property type="project" value="UniProtKB-SubCell"/>
</dbReference>
<dbReference type="GO" id="GO:0002055">
    <property type="term" value="F:adenine binding"/>
    <property type="evidence" value="ECO:0007669"/>
    <property type="project" value="TreeGrafter"/>
</dbReference>
<dbReference type="GO" id="GO:0003999">
    <property type="term" value="F:adenine phosphoribosyltransferase activity"/>
    <property type="evidence" value="ECO:0007669"/>
    <property type="project" value="UniProtKB-UniRule"/>
</dbReference>
<dbReference type="GO" id="GO:0016208">
    <property type="term" value="F:AMP binding"/>
    <property type="evidence" value="ECO:0007669"/>
    <property type="project" value="TreeGrafter"/>
</dbReference>
<dbReference type="GO" id="GO:0006168">
    <property type="term" value="P:adenine salvage"/>
    <property type="evidence" value="ECO:0007669"/>
    <property type="project" value="InterPro"/>
</dbReference>
<dbReference type="GO" id="GO:0044209">
    <property type="term" value="P:AMP salvage"/>
    <property type="evidence" value="ECO:0007669"/>
    <property type="project" value="UniProtKB-UniRule"/>
</dbReference>
<dbReference type="GO" id="GO:0006166">
    <property type="term" value="P:purine ribonucleoside salvage"/>
    <property type="evidence" value="ECO:0007669"/>
    <property type="project" value="UniProtKB-KW"/>
</dbReference>
<dbReference type="CDD" id="cd06223">
    <property type="entry name" value="PRTases_typeI"/>
    <property type="match status" value="1"/>
</dbReference>
<dbReference type="FunFam" id="3.40.50.2020:FF:000004">
    <property type="entry name" value="Adenine phosphoribosyltransferase"/>
    <property type="match status" value="1"/>
</dbReference>
<dbReference type="Gene3D" id="3.40.50.2020">
    <property type="match status" value="1"/>
</dbReference>
<dbReference type="HAMAP" id="MF_00004">
    <property type="entry name" value="Aden_phosphoribosyltr"/>
    <property type="match status" value="1"/>
</dbReference>
<dbReference type="InterPro" id="IPR005764">
    <property type="entry name" value="Ade_phspho_trans"/>
</dbReference>
<dbReference type="InterPro" id="IPR000836">
    <property type="entry name" value="PRibTrfase_dom"/>
</dbReference>
<dbReference type="InterPro" id="IPR029057">
    <property type="entry name" value="PRTase-like"/>
</dbReference>
<dbReference type="InterPro" id="IPR050054">
    <property type="entry name" value="UPRTase/APRTase"/>
</dbReference>
<dbReference type="NCBIfam" id="TIGR01090">
    <property type="entry name" value="apt"/>
    <property type="match status" value="1"/>
</dbReference>
<dbReference type="NCBIfam" id="NF002633">
    <property type="entry name" value="PRK02304.1-2"/>
    <property type="match status" value="1"/>
</dbReference>
<dbReference type="NCBIfam" id="NF002634">
    <property type="entry name" value="PRK02304.1-3"/>
    <property type="match status" value="1"/>
</dbReference>
<dbReference type="NCBIfam" id="NF002636">
    <property type="entry name" value="PRK02304.1-5"/>
    <property type="match status" value="1"/>
</dbReference>
<dbReference type="PANTHER" id="PTHR32315">
    <property type="entry name" value="ADENINE PHOSPHORIBOSYLTRANSFERASE"/>
    <property type="match status" value="1"/>
</dbReference>
<dbReference type="PANTHER" id="PTHR32315:SF3">
    <property type="entry name" value="ADENINE PHOSPHORIBOSYLTRANSFERASE"/>
    <property type="match status" value="1"/>
</dbReference>
<dbReference type="Pfam" id="PF00156">
    <property type="entry name" value="Pribosyltran"/>
    <property type="match status" value="1"/>
</dbReference>
<dbReference type="SUPFAM" id="SSF53271">
    <property type="entry name" value="PRTase-like"/>
    <property type="match status" value="1"/>
</dbReference>
<dbReference type="PROSITE" id="PS00103">
    <property type="entry name" value="PUR_PYR_PR_TRANSFER"/>
    <property type="match status" value="1"/>
</dbReference>
<evidence type="ECO:0000255" key="1">
    <source>
        <dbReference type="HAMAP-Rule" id="MF_00004"/>
    </source>
</evidence>
<protein>
    <recommendedName>
        <fullName evidence="1">Adenine phosphoribosyltransferase</fullName>
        <shortName evidence="1">APRT</shortName>
        <ecNumber evidence="1">2.4.2.7</ecNumber>
    </recommendedName>
</protein>
<name>APT_BRAHW</name>
<feature type="chain" id="PRO_1000116233" description="Adenine phosphoribosyltransferase">
    <location>
        <begin position="1"/>
        <end position="170"/>
    </location>
</feature>
<comment type="function">
    <text evidence="1">Catalyzes a salvage reaction resulting in the formation of AMP, that is energically less costly than de novo synthesis.</text>
</comment>
<comment type="catalytic activity">
    <reaction evidence="1">
        <text>AMP + diphosphate = 5-phospho-alpha-D-ribose 1-diphosphate + adenine</text>
        <dbReference type="Rhea" id="RHEA:16609"/>
        <dbReference type="ChEBI" id="CHEBI:16708"/>
        <dbReference type="ChEBI" id="CHEBI:33019"/>
        <dbReference type="ChEBI" id="CHEBI:58017"/>
        <dbReference type="ChEBI" id="CHEBI:456215"/>
        <dbReference type="EC" id="2.4.2.7"/>
    </reaction>
</comment>
<comment type="pathway">
    <text evidence="1">Purine metabolism; AMP biosynthesis via salvage pathway; AMP from adenine: step 1/1.</text>
</comment>
<comment type="subunit">
    <text evidence="1">Homodimer.</text>
</comment>
<comment type="subcellular location">
    <subcellularLocation>
        <location evidence="1">Cytoplasm</location>
    </subcellularLocation>
</comment>
<comment type="similarity">
    <text evidence="1">Belongs to the purine/pyrimidine phosphoribosyltransferase family.</text>
</comment>
<accession>C0QVL4</accession>